<sequence>MTNETWVQVREGLLKRVGRNNFVTWIEPLRLMGLDEGVARFEVPTLFFGDWVQRNFADHIRMRLTEAGSPVERLEFAVSNTPRAPLKEVKAAAPAASPARARPAPPEEDLRGAPLDARFTFDSFVVGKPNELAHAAARRVAEGGPVTFNPLFLYGGVGLGKTHLMHAIAHDLQKRQPGARVLYLSAEQFMYRFVQALREREILGFKELFRSVDVLMVDDVQFIAGKDSTQEEFFHTFNALVDQNKQIVISADRAPGEIKDLEERIKSRLQCGLVVDLHPTDYELRLGILQQKADFYREQYRGLVIADGVLEFLAHRITTNVRVLEGALTRLFAFASLVGREITLDLAQDCLADILRASDRKVTIEEIQRKVAEHYNIRLSDMIGPKRLRTIARPRQVAMYLAKQLTPRSLPEIGRRFGGRDHTTIMHGVRKIEELMATDSQLADDLQLLRRLLQA</sequence>
<organism>
    <name type="scientific">Cereibacter sphaeroides (strain ATCC 17029 / ATH 2.4.9)</name>
    <name type="common">Rhodobacter sphaeroides</name>
    <dbReference type="NCBI Taxonomy" id="349101"/>
    <lineage>
        <taxon>Bacteria</taxon>
        <taxon>Pseudomonadati</taxon>
        <taxon>Pseudomonadota</taxon>
        <taxon>Alphaproteobacteria</taxon>
        <taxon>Rhodobacterales</taxon>
        <taxon>Paracoccaceae</taxon>
        <taxon>Cereibacter</taxon>
    </lineage>
</organism>
<protein>
    <recommendedName>
        <fullName evidence="1">Chromosomal replication initiator protein DnaA</fullName>
    </recommendedName>
</protein>
<gene>
    <name evidence="1" type="primary">dnaA</name>
    <name type="ordered locus">Rsph17029_0011</name>
</gene>
<dbReference type="EMBL" id="CP000577">
    <property type="protein sequence ID" value="ABN75131.1"/>
    <property type="molecule type" value="Genomic_DNA"/>
</dbReference>
<dbReference type="RefSeq" id="WP_002721917.1">
    <property type="nucleotide sequence ID" value="NC_009049.1"/>
</dbReference>
<dbReference type="SMR" id="A3PFL5"/>
<dbReference type="GeneID" id="67448113"/>
<dbReference type="KEGG" id="rsh:Rsph17029_0011"/>
<dbReference type="HOGENOM" id="CLU_026910_3_0_5"/>
<dbReference type="GO" id="GO:0005737">
    <property type="term" value="C:cytoplasm"/>
    <property type="evidence" value="ECO:0007669"/>
    <property type="project" value="UniProtKB-SubCell"/>
</dbReference>
<dbReference type="GO" id="GO:0005886">
    <property type="term" value="C:plasma membrane"/>
    <property type="evidence" value="ECO:0007669"/>
    <property type="project" value="TreeGrafter"/>
</dbReference>
<dbReference type="GO" id="GO:0005524">
    <property type="term" value="F:ATP binding"/>
    <property type="evidence" value="ECO:0007669"/>
    <property type="project" value="UniProtKB-UniRule"/>
</dbReference>
<dbReference type="GO" id="GO:0016887">
    <property type="term" value="F:ATP hydrolysis activity"/>
    <property type="evidence" value="ECO:0007669"/>
    <property type="project" value="InterPro"/>
</dbReference>
<dbReference type="GO" id="GO:0003688">
    <property type="term" value="F:DNA replication origin binding"/>
    <property type="evidence" value="ECO:0007669"/>
    <property type="project" value="UniProtKB-UniRule"/>
</dbReference>
<dbReference type="GO" id="GO:0008289">
    <property type="term" value="F:lipid binding"/>
    <property type="evidence" value="ECO:0007669"/>
    <property type="project" value="UniProtKB-KW"/>
</dbReference>
<dbReference type="GO" id="GO:0006270">
    <property type="term" value="P:DNA replication initiation"/>
    <property type="evidence" value="ECO:0007669"/>
    <property type="project" value="UniProtKB-UniRule"/>
</dbReference>
<dbReference type="GO" id="GO:0006275">
    <property type="term" value="P:regulation of DNA replication"/>
    <property type="evidence" value="ECO:0007669"/>
    <property type="project" value="UniProtKB-UniRule"/>
</dbReference>
<dbReference type="CDD" id="cd00009">
    <property type="entry name" value="AAA"/>
    <property type="match status" value="1"/>
</dbReference>
<dbReference type="CDD" id="cd06571">
    <property type="entry name" value="Bac_DnaA_C"/>
    <property type="match status" value="1"/>
</dbReference>
<dbReference type="FunFam" id="3.40.50.300:FF:000668">
    <property type="entry name" value="Chromosomal replication initiator protein DnaA"/>
    <property type="match status" value="1"/>
</dbReference>
<dbReference type="Gene3D" id="1.10.1750.10">
    <property type="match status" value="1"/>
</dbReference>
<dbReference type="Gene3D" id="1.10.8.60">
    <property type="match status" value="1"/>
</dbReference>
<dbReference type="Gene3D" id="3.30.300.180">
    <property type="match status" value="1"/>
</dbReference>
<dbReference type="Gene3D" id="3.40.50.300">
    <property type="entry name" value="P-loop containing nucleotide triphosphate hydrolases"/>
    <property type="match status" value="1"/>
</dbReference>
<dbReference type="HAMAP" id="MF_00377">
    <property type="entry name" value="DnaA_bact"/>
    <property type="match status" value="1"/>
</dbReference>
<dbReference type="InterPro" id="IPR003593">
    <property type="entry name" value="AAA+_ATPase"/>
</dbReference>
<dbReference type="InterPro" id="IPR001957">
    <property type="entry name" value="Chromosome_initiator_DnaA"/>
</dbReference>
<dbReference type="InterPro" id="IPR020591">
    <property type="entry name" value="Chromosome_initiator_DnaA-like"/>
</dbReference>
<dbReference type="InterPro" id="IPR018312">
    <property type="entry name" value="Chromosome_initiator_DnaA_CS"/>
</dbReference>
<dbReference type="InterPro" id="IPR013159">
    <property type="entry name" value="DnaA_C"/>
</dbReference>
<dbReference type="InterPro" id="IPR013317">
    <property type="entry name" value="DnaA_dom"/>
</dbReference>
<dbReference type="InterPro" id="IPR024633">
    <property type="entry name" value="DnaA_N_dom"/>
</dbReference>
<dbReference type="InterPro" id="IPR038454">
    <property type="entry name" value="DnaA_N_sf"/>
</dbReference>
<dbReference type="InterPro" id="IPR027417">
    <property type="entry name" value="P-loop_NTPase"/>
</dbReference>
<dbReference type="InterPro" id="IPR010921">
    <property type="entry name" value="Trp_repressor/repl_initiator"/>
</dbReference>
<dbReference type="NCBIfam" id="TIGR00362">
    <property type="entry name" value="DnaA"/>
    <property type="match status" value="1"/>
</dbReference>
<dbReference type="PANTHER" id="PTHR30050">
    <property type="entry name" value="CHROMOSOMAL REPLICATION INITIATOR PROTEIN DNAA"/>
    <property type="match status" value="1"/>
</dbReference>
<dbReference type="PANTHER" id="PTHR30050:SF2">
    <property type="entry name" value="CHROMOSOMAL REPLICATION INITIATOR PROTEIN DNAA"/>
    <property type="match status" value="1"/>
</dbReference>
<dbReference type="Pfam" id="PF00308">
    <property type="entry name" value="Bac_DnaA"/>
    <property type="match status" value="1"/>
</dbReference>
<dbReference type="Pfam" id="PF08299">
    <property type="entry name" value="Bac_DnaA_C"/>
    <property type="match status" value="1"/>
</dbReference>
<dbReference type="Pfam" id="PF11638">
    <property type="entry name" value="DnaA_N"/>
    <property type="match status" value="1"/>
</dbReference>
<dbReference type="PRINTS" id="PR00051">
    <property type="entry name" value="DNAA"/>
</dbReference>
<dbReference type="SMART" id="SM00382">
    <property type="entry name" value="AAA"/>
    <property type="match status" value="1"/>
</dbReference>
<dbReference type="SMART" id="SM00760">
    <property type="entry name" value="Bac_DnaA_C"/>
    <property type="match status" value="1"/>
</dbReference>
<dbReference type="SUPFAM" id="SSF52540">
    <property type="entry name" value="P-loop containing nucleoside triphosphate hydrolases"/>
    <property type="match status" value="1"/>
</dbReference>
<dbReference type="SUPFAM" id="SSF48295">
    <property type="entry name" value="TrpR-like"/>
    <property type="match status" value="1"/>
</dbReference>
<dbReference type="PROSITE" id="PS01008">
    <property type="entry name" value="DNAA"/>
    <property type="match status" value="1"/>
</dbReference>
<accession>A3PFL5</accession>
<comment type="function">
    <text evidence="1">Plays an essential role in the initiation and regulation of chromosomal replication. ATP-DnaA binds to the origin of replication (oriC) to initiate formation of the DNA replication initiation complex once per cell cycle. Binds the DnaA box (a 9 base pair repeat at the origin) and separates the double-stranded (ds)DNA. Forms a right-handed helical filament on oriC DNA; dsDNA binds to the exterior of the filament while single-stranded (ss)DNA is stabiized in the filament's interior. The ATP-DnaA-oriC complex binds and stabilizes one strand of the AT-rich DNA unwinding element (DUE), permitting loading of DNA polymerase. After initiation quickly degrades to an ADP-DnaA complex that is not apt for DNA replication. Binds acidic phospholipids.</text>
</comment>
<comment type="subunit">
    <text evidence="1">Oligomerizes as a right-handed, spiral filament on DNA at oriC.</text>
</comment>
<comment type="subcellular location">
    <subcellularLocation>
        <location evidence="1">Cytoplasm</location>
    </subcellularLocation>
</comment>
<comment type="domain">
    <text evidence="1">Domain I is involved in oligomerization and binding regulators, domain II is flexibile and of varying length in different bacteria, domain III forms the AAA+ region, while domain IV binds dsDNA.</text>
</comment>
<comment type="similarity">
    <text evidence="1">Belongs to the DnaA family.</text>
</comment>
<keyword id="KW-0067">ATP-binding</keyword>
<keyword id="KW-0963">Cytoplasm</keyword>
<keyword id="KW-0235">DNA replication</keyword>
<keyword id="KW-0238">DNA-binding</keyword>
<keyword id="KW-0446">Lipid-binding</keyword>
<keyword id="KW-0547">Nucleotide-binding</keyword>
<feature type="chain" id="PRO_1000048706" description="Chromosomal replication initiator protein DnaA">
    <location>
        <begin position="1"/>
        <end position="455"/>
    </location>
</feature>
<feature type="region of interest" description="Domain I, interacts with DnaA modulators" evidence="1">
    <location>
        <begin position="1"/>
        <end position="70"/>
    </location>
</feature>
<feature type="region of interest" description="Domain II" evidence="1">
    <location>
        <begin position="70"/>
        <end position="113"/>
    </location>
</feature>
<feature type="region of interest" description="Disordered" evidence="2">
    <location>
        <begin position="87"/>
        <end position="109"/>
    </location>
</feature>
<feature type="region of interest" description="Domain III, AAA+ region" evidence="1">
    <location>
        <begin position="114"/>
        <end position="335"/>
    </location>
</feature>
<feature type="region of interest" description="Domain IV, binds dsDNA" evidence="1">
    <location>
        <begin position="336"/>
        <end position="455"/>
    </location>
</feature>
<feature type="compositionally biased region" description="Low complexity" evidence="2">
    <location>
        <begin position="91"/>
        <end position="102"/>
    </location>
</feature>
<feature type="binding site" evidence="1">
    <location>
        <position position="158"/>
    </location>
    <ligand>
        <name>ATP</name>
        <dbReference type="ChEBI" id="CHEBI:30616"/>
    </ligand>
</feature>
<feature type="binding site" evidence="1">
    <location>
        <position position="160"/>
    </location>
    <ligand>
        <name>ATP</name>
        <dbReference type="ChEBI" id="CHEBI:30616"/>
    </ligand>
</feature>
<feature type="binding site" evidence="1">
    <location>
        <position position="161"/>
    </location>
    <ligand>
        <name>ATP</name>
        <dbReference type="ChEBI" id="CHEBI:30616"/>
    </ligand>
</feature>
<feature type="binding site" evidence="1">
    <location>
        <position position="162"/>
    </location>
    <ligand>
        <name>ATP</name>
        <dbReference type="ChEBI" id="CHEBI:30616"/>
    </ligand>
</feature>
<evidence type="ECO:0000255" key="1">
    <source>
        <dbReference type="HAMAP-Rule" id="MF_00377"/>
    </source>
</evidence>
<evidence type="ECO:0000256" key="2">
    <source>
        <dbReference type="SAM" id="MobiDB-lite"/>
    </source>
</evidence>
<name>DNAA_CERS1</name>
<reference key="1">
    <citation type="submission" date="2007-02" db="EMBL/GenBank/DDBJ databases">
        <title>Complete sequence of chromosome 1 of Rhodobacter sphaeroides ATCC 17029.</title>
        <authorList>
            <person name="Copeland A."/>
            <person name="Lucas S."/>
            <person name="Lapidus A."/>
            <person name="Barry K."/>
            <person name="Detter J.C."/>
            <person name="Glavina del Rio T."/>
            <person name="Hammon N."/>
            <person name="Israni S."/>
            <person name="Dalin E."/>
            <person name="Tice H."/>
            <person name="Pitluck S."/>
            <person name="Kiss H."/>
            <person name="Brettin T."/>
            <person name="Bruce D."/>
            <person name="Han C."/>
            <person name="Tapia R."/>
            <person name="Gilna P."/>
            <person name="Schmutz J."/>
            <person name="Larimer F."/>
            <person name="Land M."/>
            <person name="Hauser L."/>
            <person name="Kyrpides N."/>
            <person name="Mikhailova N."/>
            <person name="Richardson P."/>
            <person name="Mackenzie C."/>
            <person name="Choudhary M."/>
            <person name="Donohue T.J."/>
            <person name="Kaplan S."/>
        </authorList>
    </citation>
    <scope>NUCLEOTIDE SEQUENCE [LARGE SCALE GENOMIC DNA]</scope>
    <source>
        <strain>ATCC 17029 / ATH 2.4.9</strain>
    </source>
</reference>
<proteinExistence type="inferred from homology"/>